<name>3MGH_CHLPB</name>
<evidence type="ECO:0000255" key="1">
    <source>
        <dbReference type="HAMAP-Rule" id="MF_00527"/>
    </source>
</evidence>
<feature type="chain" id="PRO_1000127755" description="Putative 3-methyladenine DNA glycosylase">
    <location>
        <begin position="1"/>
        <end position="199"/>
    </location>
</feature>
<organism>
    <name type="scientific">Chlorobium phaeobacteroides (strain BS1)</name>
    <dbReference type="NCBI Taxonomy" id="331678"/>
    <lineage>
        <taxon>Bacteria</taxon>
        <taxon>Pseudomonadati</taxon>
        <taxon>Chlorobiota</taxon>
        <taxon>Chlorobiia</taxon>
        <taxon>Chlorobiales</taxon>
        <taxon>Chlorobiaceae</taxon>
        <taxon>Chlorobium/Pelodictyon group</taxon>
        <taxon>Chlorobium</taxon>
    </lineage>
</organism>
<gene>
    <name type="ordered locus">Cphamn1_2088</name>
</gene>
<comment type="similarity">
    <text evidence="1">Belongs to the DNA glycosylase MPG family.</text>
</comment>
<accession>B3EN08</accession>
<protein>
    <recommendedName>
        <fullName evidence="1">Putative 3-methyladenine DNA glycosylase</fullName>
        <ecNumber evidence="1">3.2.2.-</ecNumber>
    </recommendedName>
</protein>
<reference key="1">
    <citation type="submission" date="2008-06" db="EMBL/GenBank/DDBJ databases">
        <title>Complete sequence of Chlorobium phaeobacteroides BS1.</title>
        <authorList>
            <consortium name="US DOE Joint Genome Institute"/>
            <person name="Lucas S."/>
            <person name="Copeland A."/>
            <person name="Lapidus A."/>
            <person name="Glavina del Rio T."/>
            <person name="Dalin E."/>
            <person name="Tice H."/>
            <person name="Bruce D."/>
            <person name="Goodwin L."/>
            <person name="Pitluck S."/>
            <person name="Schmutz J."/>
            <person name="Larimer F."/>
            <person name="Land M."/>
            <person name="Hauser L."/>
            <person name="Kyrpides N."/>
            <person name="Ovchinnikova G."/>
            <person name="Li T."/>
            <person name="Liu Z."/>
            <person name="Zhao F."/>
            <person name="Overmann J."/>
            <person name="Bryant D.A."/>
            <person name="Richardson P."/>
        </authorList>
    </citation>
    <scope>NUCLEOTIDE SEQUENCE [LARGE SCALE GENOMIC DNA]</scope>
    <source>
        <strain>BS1</strain>
    </source>
</reference>
<proteinExistence type="inferred from homology"/>
<sequence>MEKLGEDFFTKPTLMLAELLLGKIFVHNTGDGRCYRGKIVETEAYLAEGDEACHAYRGMTKRNRPMYGSPGTLYVYFSYGCHHLMNIVTEPAGVAGAVLIRAMEPIEGLEDMKRNRGLERTVDLLNGPGKLTRAMEITLSHNGASLSGDTVFIEKREDTAPHKICSSKRIGITKSTGLLWRRYVSDSFFVSGKKAGKAC</sequence>
<keyword id="KW-0227">DNA damage</keyword>
<keyword id="KW-0234">DNA repair</keyword>
<keyword id="KW-0378">Hydrolase</keyword>
<dbReference type="EC" id="3.2.2.-" evidence="1"/>
<dbReference type="EMBL" id="CP001101">
    <property type="protein sequence ID" value="ACE04997.1"/>
    <property type="molecule type" value="Genomic_DNA"/>
</dbReference>
<dbReference type="SMR" id="B3EN08"/>
<dbReference type="STRING" id="331678.Cphamn1_2088"/>
<dbReference type="KEGG" id="cpb:Cphamn1_2088"/>
<dbReference type="eggNOG" id="COG2094">
    <property type="taxonomic scope" value="Bacteria"/>
</dbReference>
<dbReference type="HOGENOM" id="CLU_060471_4_1_10"/>
<dbReference type="OrthoDB" id="9794313at2"/>
<dbReference type="GO" id="GO:0003905">
    <property type="term" value="F:alkylbase DNA N-glycosylase activity"/>
    <property type="evidence" value="ECO:0007669"/>
    <property type="project" value="InterPro"/>
</dbReference>
<dbReference type="GO" id="GO:0003677">
    <property type="term" value="F:DNA binding"/>
    <property type="evidence" value="ECO:0007669"/>
    <property type="project" value="InterPro"/>
</dbReference>
<dbReference type="GO" id="GO:0006284">
    <property type="term" value="P:base-excision repair"/>
    <property type="evidence" value="ECO:0007669"/>
    <property type="project" value="InterPro"/>
</dbReference>
<dbReference type="CDD" id="cd00540">
    <property type="entry name" value="AAG"/>
    <property type="match status" value="1"/>
</dbReference>
<dbReference type="FunFam" id="3.10.300.10:FF:000001">
    <property type="entry name" value="Putative 3-methyladenine DNA glycosylase"/>
    <property type="match status" value="1"/>
</dbReference>
<dbReference type="Gene3D" id="3.10.300.10">
    <property type="entry name" value="Methylpurine-DNA glycosylase (MPG)"/>
    <property type="match status" value="1"/>
</dbReference>
<dbReference type="HAMAP" id="MF_00527">
    <property type="entry name" value="3MGH"/>
    <property type="match status" value="1"/>
</dbReference>
<dbReference type="InterPro" id="IPR011034">
    <property type="entry name" value="Formyl_transferase-like_C_sf"/>
</dbReference>
<dbReference type="InterPro" id="IPR003180">
    <property type="entry name" value="MPG"/>
</dbReference>
<dbReference type="InterPro" id="IPR036995">
    <property type="entry name" value="MPG_sf"/>
</dbReference>
<dbReference type="NCBIfam" id="TIGR00567">
    <property type="entry name" value="3mg"/>
    <property type="match status" value="1"/>
</dbReference>
<dbReference type="NCBIfam" id="NF002003">
    <property type="entry name" value="PRK00802.1-3"/>
    <property type="match status" value="1"/>
</dbReference>
<dbReference type="PANTHER" id="PTHR10429">
    <property type="entry name" value="DNA-3-METHYLADENINE GLYCOSYLASE"/>
    <property type="match status" value="1"/>
</dbReference>
<dbReference type="PANTHER" id="PTHR10429:SF0">
    <property type="entry name" value="DNA-3-METHYLADENINE GLYCOSYLASE"/>
    <property type="match status" value="1"/>
</dbReference>
<dbReference type="Pfam" id="PF02245">
    <property type="entry name" value="Pur_DNA_glyco"/>
    <property type="match status" value="1"/>
</dbReference>
<dbReference type="SUPFAM" id="SSF50486">
    <property type="entry name" value="FMT C-terminal domain-like"/>
    <property type="match status" value="1"/>
</dbReference>